<gene>
    <name evidence="4" type="primary">tmem-258</name>
    <name evidence="4" type="ORF">CBG19073</name>
</gene>
<reference key="1">
    <citation type="journal article" date="2003" name="PLoS Biol.">
        <title>The genome sequence of Caenorhabditis briggsae: a platform for comparative genomics.</title>
        <authorList>
            <person name="Stein L.D."/>
            <person name="Bao Z."/>
            <person name="Blasiar D."/>
            <person name="Blumenthal T."/>
            <person name="Brent M.R."/>
            <person name="Chen N."/>
            <person name="Chinwalla A."/>
            <person name="Clarke L."/>
            <person name="Clee C."/>
            <person name="Coghlan A."/>
            <person name="Coulson A."/>
            <person name="D'Eustachio P."/>
            <person name="Fitch D.H.A."/>
            <person name="Fulton L.A."/>
            <person name="Fulton R.E."/>
            <person name="Griffiths-Jones S."/>
            <person name="Harris T.W."/>
            <person name="Hillier L.W."/>
            <person name="Kamath R."/>
            <person name="Kuwabara P.E."/>
            <person name="Mardis E.R."/>
            <person name="Marra M.A."/>
            <person name="Miner T.L."/>
            <person name="Minx P."/>
            <person name="Mullikin J.C."/>
            <person name="Plumb R.W."/>
            <person name="Rogers J."/>
            <person name="Schein J.E."/>
            <person name="Sohrmann M."/>
            <person name="Spieth J."/>
            <person name="Stajich J.E."/>
            <person name="Wei C."/>
            <person name="Willey D."/>
            <person name="Wilson R.K."/>
            <person name="Durbin R.M."/>
            <person name="Waterston R.H."/>
        </authorList>
    </citation>
    <scope>NUCLEOTIDE SEQUENCE [LARGE SCALE GENOMIC DNA]</scope>
    <source>
        <strain>AF16</strain>
    </source>
</reference>
<feature type="chain" id="PRO_0000235836" description="Dolichyl-diphosphooligosaccharide--protein glycosyltransferase subunit TMEM258">
    <location>
        <begin position="1"/>
        <end position="79"/>
    </location>
</feature>
<feature type="transmembrane region" description="Helical" evidence="2">
    <location>
        <begin position="18"/>
        <end position="38"/>
    </location>
</feature>
<feature type="transmembrane region" description="Helical" evidence="2">
    <location>
        <begin position="55"/>
        <end position="75"/>
    </location>
</feature>
<proteinExistence type="inferred from homology"/>
<protein>
    <recommendedName>
        <fullName>Dolichyl-diphosphooligosaccharide--protein glycosyltransferase subunit TMEM258</fullName>
        <shortName>Oligosaccharyl transferase subunit TMEM258</shortName>
    </recommendedName>
    <alternativeName>
        <fullName evidence="3">Transmembrane protein 258</fullName>
    </alternativeName>
</protein>
<sequence length="79" mass="8692">MDISKMDRYAAPVHFSSLPLLATVLCGVGLLLLAAFTMLQVTSTKYNRNVFKELFIAATSSIFLGFGSVFLLLWVGIYV</sequence>
<organism>
    <name type="scientific">Caenorhabditis briggsae</name>
    <dbReference type="NCBI Taxonomy" id="6238"/>
    <lineage>
        <taxon>Eukaryota</taxon>
        <taxon>Metazoa</taxon>
        <taxon>Ecdysozoa</taxon>
        <taxon>Nematoda</taxon>
        <taxon>Chromadorea</taxon>
        <taxon>Rhabditida</taxon>
        <taxon>Rhabditina</taxon>
        <taxon>Rhabditomorpha</taxon>
        <taxon>Rhabditoidea</taxon>
        <taxon>Rhabditidae</taxon>
        <taxon>Peloderinae</taxon>
        <taxon>Caenorhabditis</taxon>
    </lineage>
</organism>
<keyword id="KW-0472">Membrane</keyword>
<keyword id="KW-1185">Reference proteome</keyword>
<keyword id="KW-0812">Transmembrane</keyword>
<keyword id="KW-1133">Transmembrane helix</keyword>
<evidence type="ECO:0000250" key="1">
    <source>
        <dbReference type="UniProtKB" id="P61165"/>
    </source>
</evidence>
<evidence type="ECO:0000255" key="2"/>
<evidence type="ECO:0000305" key="3"/>
<evidence type="ECO:0000312" key="4">
    <source>
        <dbReference type="WormBase" id="CBG19073"/>
    </source>
</evidence>
<name>TM258_CAEBR</name>
<accession>Q60WL8</accession>
<accession>A8XUQ5</accession>
<comment type="function">
    <text evidence="1">Subunit of the oligosaccharyl transferase (OST) complex that catalyzes the initial transfer of a defined glycan (Glc(3)Man(9)GlcNAc(2) in eukaryotes) from the lipid carrier dolichol-pyrophosphate to an asparagine residue within an Asn-X-Ser/Thr consensus motif in nascent polypeptide chains, the first step in protein N-glycosylation. N-glycosylation occurs cotranslationally and the complex associates with the Sec61 complex at the channel-forming translocon complex that mediates protein translocation across the endoplasmic reticulum (ER). All subunits are required for a maximal enzyme activity.</text>
</comment>
<comment type="pathway">
    <text evidence="1">Protein modification; protein glycosylation.</text>
</comment>
<comment type="subunit">
    <text evidence="1">Component of the oligosaccharyltransferase (OST) complex.</text>
</comment>
<comment type="subcellular location">
    <subcellularLocation>
        <location evidence="3">Membrane</location>
        <topology evidence="3">Multi-pass membrane protein</topology>
    </subcellularLocation>
</comment>
<comment type="similarity">
    <text evidence="3">Belongs to the OST5 family.</text>
</comment>
<dbReference type="EMBL" id="HE601047">
    <property type="protein sequence ID" value="CAP36380.3"/>
    <property type="molecule type" value="Genomic_DNA"/>
</dbReference>
<dbReference type="RefSeq" id="XP_002637372.1">
    <property type="nucleotide sequence ID" value="XM_002637326.1"/>
</dbReference>
<dbReference type="SMR" id="Q60WL8"/>
<dbReference type="FunCoup" id="Q60WL8">
    <property type="interactions" value="946"/>
</dbReference>
<dbReference type="STRING" id="6238.Q60WL8"/>
<dbReference type="EnsemblMetazoa" id="CBG19073.1">
    <property type="protein sequence ID" value="CBG19073.1"/>
    <property type="gene ID" value="WBGene00038351"/>
</dbReference>
<dbReference type="GeneID" id="8579367"/>
<dbReference type="KEGG" id="cbr:CBG_19073"/>
<dbReference type="CTD" id="8579367"/>
<dbReference type="WormBase" id="CBG19073">
    <property type="protein sequence ID" value="CBP19435"/>
    <property type="gene ID" value="WBGene00038351"/>
    <property type="gene designation" value="Cbr-tmem-258"/>
</dbReference>
<dbReference type="eggNOG" id="KOG4452">
    <property type="taxonomic scope" value="Eukaryota"/>
</dbReference>
<dbReference type="HOGENOM" id="CLU_180449_0_0_1"/>
<dbReference type="InParanoid" id="Q60WL8"/>
<dbReference type="OMA" id="MERYVGP"/>
<dbReference type="OrthoDB" id="18408at2759"/>
<dbReference type="UniPathway" id="UPA00378"/>
<dbReference type="Proteomes" id="UP000008549">
    <property type="component" value="Unassembled WGS sequence"/>
</dbReference>
<dbReference type="GO" id="GO:0005737">
    <property type="term" value="C:cytoplasm"/>
    <property type="evidence" value="ECO:0000250"/>
    <property type="project" value="UniProtKB"/>
</dbReference>
<dbReference type="GO" id="GO:0005789">
    <property type="term" value="C:endoplasmic reticulum membrane"/>
    <property type="evidence" value="ECO:0000318"/>
    <property type="project" value="GO_Central"/>
</dbReference>
<dbReference type="GO" id="GO:0016020">
    <property type="term" value="C:membrane"/>
    <property type="evidence" value="ECO:0000250"/>
    <property type="project" value="UniProtKB"/>
</dbReference>
<dbReference type="GO" id="GO:0008250">
    <property type="term" value="C:oligosaccharyltransferase complex"/>
    <property type="evidence" value="ECO:0007669"/>
    <property type="project" value="InterPro"/>
</dbReference>
<dbReference type="GO" id="GO:0062062">
    <property type="term" value="F:oligosaccharyltransferase complex binding"/>
    <property type="evidence" value="ECO:0000318"/>
    <property type="project" value="GO_Central"/>
</dbReference>
<dbReference type="GO" id="GO:0006486">
    <property type="term" value="P:protein glycosylation"/>
    <property type="evidence" value="ECO:0007669"/>
    <property type="project" value="UniProtKB-UniPathway"/>
</dbReference>
<dbReference type="GO" id="GO:0034976">
    <property type="term" value="P:response to endoplasmic reticulum stress"/>
    <property type="evidence" value="ECO:0000318"/>
    <property type="project" value="GO_Central"/>
</dbReference>
<dbReference type="InterPro" id="IPR007915">
    <property type="entry name" value="TMEM258/Ost5"/>
</dbReference>
<dbReference type="PANTHER" id="PTHR13636">
    <property type="entry name" value="TRANSMEMBRANE PROTEIN 258"/>
    <property type="match status" value="1"/>
</dbReference>
<dbReference type="Pfam" id="PF05251">
    <property type="entry name" value="Ost5"/>
    <property type="match status" value="1"/>
</dbReference>